<feature type="chain" id="PRO_0000401407" description="Putative pumilio homolog 25">
    <location>
        <begin position="1"/>
        <end position="137"/>
    </location>
</feature>
<feature type="repeat" description="Pumilio 1">
    <location>
        <begin position="70"/>
        <end position="105"/>
    </location>
</feature>
<feature type="repeat" description="Pumilio 2">
    <location>
        <begin position="108"/>
        <end position="137"/>
    </location>
</feature>
<evidence type="ECO:0000250" key="1"/>
<evidence type="ECO:0000305" key="2"/>
<proteinExistence type="inferred from homology"/>
<gene>
    <name type="primary">APUM25</name>
    <name type="ordered locus">At3g24270</name>
    <name type="ORF">K7M2.3</name>
</gene>
<reference key="1">
    <citation type="journal article" date="2000" name="DNA Res.">
        <title>Structural analysis of Arabidopsis thaliana chromosome 3. II. Sequence features of the 4,251,695 bp regions covered by 90 P1, TAC and BAC clones.</title>
        <authorList>
            <person name="Kaneko T."/>
            <person name="Katoh T."/>
            <person name="Sato S."/>
            <person name="Nakamura Y."/>
            <person name="Asamizu E."/>
            <person name="Tabata S."/>
        </authorList>
    </citation>
    <scope>NUCLEOTIDE SEQUENCE [LARGE SCALE GENOMIC DNA]</scope>
    <source>
        <strain>cv. Columbia</strain>
    </source>
</reference>
<reference key="2">
    <citation type="journal article" date="2017" name="Plant J.">
        <title>Araport11: a complete reannotation of the Arabidopsis thaliana reference genome.</title>
        <authorList>
            <person name="Cheng C.Y."/>
            <person name="Krishnakumar V."/>
            <person name="Chan A.P."/>
            <person name="Thibaud-Nissen F."/>
            <person name="Schobel S."/>
            <person name="Town C.D."/>
        </authorList>
    </citation>
    <scope>GENOME REANNOTATION</scope>
    <source>
        <strain>cv. Columbia</strain>
    </source>
</reference>
<reference key="3">
    <citation type="journal article" date="2009" name="FEBS J.">
        <title>Molecular characterization of Arabidopsis thaliana PUF proteins -- binding specificity and target candidates.</title>
        <authorList>
            <person name="Francischini C.W."/>
            <person name="Quaggio R.B."/>
        </authorList>
    </citation>
    <scope>GENE FAMILY</scope>
</reference>
<reference key="4">
    <citation type="journal article" date="2010" name="BMC Plant Biol.">
        <title>The Puf family of RNA-binding proteins in plants: phylogeny, structural modeling, activity and subcellular localization.</title>
        <authorList>
            <person name="Tam P.P."/>
            <person name="Barrette-Ng I.H."/>
            <person name="Simon D.M."/>
            <person name="Tam M.W."/>
            <person name="Ang A.L."/>
            <person name="Muench D.G."/>
        </authorList>
    </citation>
    <scope>GENE FAMILY</scope>
</reference>
<keyword id="KW-0963">Cytoplasm</keyword>
<keyword id="KW-1185">Reference proteome</keyword>
<keyword id="KW-0677">Repeat</keyword>
<keyword id="KW-0694">RNA-binding</keyword>
<keyword id="KW-0810">Translation regulation</keyword>
<sequence>MVQLLFKFLIQVGATFVELSRNEIGNKNLLLLIHHAGSLLLSMFGSFSNYPVQKFLDMLDERCLTLIASEFDSYFENLVKDRVGNYVVQRLIWGFKRTGIDLPHSLTSVLVTRSIHLCKHRYGYQVIEAFDRSTRLA</sequence>
<organism>
    <name type="scientific">Arabidopsis thaliana</name>
    <name type="common">Mouse-ear cress</name>
    <dbReference type="NCBI Taxonomy" id="3702"/>
    <lineage>
        <taxon>Eukaryota</taxon>
        <taxon>Viridiplantae</taxon>
        <taxon>Streptophyta</taxon>
        <taxon>Embryophyta</taxon>
        <taxon>Tracheophyta</taxon>
        <taxon>Spermatophyta</taxon>
        <taxon>Magnoliopsida</taxon>
        <taxon>eudicotyledons</taxon>
        <taxon>Gunneridae</taxon>
        <taxon>Pentapetalae</taxon>
        <taxon>rosids</taxon>
        <taxon>malvids</taxon>
        <taxon>Brassicales</taxon>
        <taxon>Brassicaceae</taxon>
        <taxon>Camelineae</taxon>
        <taxon>Arabidopsis</taxon>
    </lineage>
</organism>
<name>PUM25_ARATH</name>
<accession>Q9LK18</accession>
<comment type="function">
    <text evidence="1">Sequence-specific RNA-binding protein that regulates translation and mRNA stability by binding the 3'-UTR of target mRNAs.</text>
</comment>
<comment type="subcellular location">
    <subcellularLocation>
        <location evidence="2">Cytoplasm</location>
    </subcellularLocation>
</comment>
<comment type="domain">
    <text evidence="1">The pumilio repeats mediate the association with RNA by packing together to form a right-handed superhelix that approximates a half donut. The number as well as the specific sequence of the repeats determine the specificity for target mRNAs (By similarity).</text>
</comment>
<comment type="sequence caution" evidence="2">
    <conflict type="erroneous gene model prediction">
        <sequence resource="EMBL-CDS" id="BAB02926"/>
    </conflict>
</comment>
<protein>
    <recommendedName>
        <fullName>Putative pumilio homolog 25</fullName>
        <shortName>APUM-25</shortName>
        <shortName>AtPUM25</shortName>
    </recommendedName>
</protein>
<dbReference type="EMBL" id="AP000382">
    <property type="protein sequence ID" value="BAB02926.1"/>
    <property type="status" value="ALT_SEQ"/>
    <property type="molecule type" value="Genomic_DNA"/>
</dbReference>
<dbReference type="EMBL" id="CP002686">
    <property type="protein sequence ID" value="AEE76883.1"/>
    <property type="molecule type" value="Genomic_DNA"/>
</dbReference>
<dbReference type="RefSeq" id="NP_189070.1">
    <property type="nucleotide sequence ID" value="NM_113333.1"/>
</dbReference>
<dbReference type="SMR" id="Q9LK18"/>
<dbReference type="STRING" id="3702.Q9LK18"/>
<dbReference type="PaxDb" id="3702-AT3G24270.1"/>
<dbReference type="EnsemblPlants" id="AT3G24270.1">
    <property type="protein sequence ID" value="AT3G24270.1"/>
    <property type="gene ID" value="AT3G24270"/>
</dbReference>
<dbReference type="GeneID" id="822015"/>
<dbReference type="Gramene" id="AT3G24270.1">
    <property type="protein sequence ID" value="AT3G24270.1"/>
    <property type="gene ID" value="AT3G24270"/>
</dbReference>
<dbReference type="KEGG" id="ath:AT3G24270"/>
<dbReference type="Araport" id="AT3G24270"/>
<dbReference type="TAIR" id="AT3G24270">
    <property type="gene designation" value="PUM25"/>
</dbReference>
<dbReference type="HOGENOM" id="CLU_1867939_0_0_1"/>
<dbReference type="InParanoid" id="Q9LK18"/>
<dbReference type="OrthoDB" id="10298407at2759"/>
<dbReference type="PRO" id="PR:Q9LK18"/>
<dbReference type="Proteomes" id="UP000006548">
    <property type="component" value="Chromosome 3"/>
</dbReference>
<dbReference type="ExpressionAtlas" id="Q9LK18">
    <property type="expression patterns" value="baseline and differential"/>
</dbReference>
<dbReference type="GO" id="GO:0005737">
    <property type="term" value="C:cytoplasm"/>
    <property type="evidence" value="ECO:0007669"/>
    <property type="project" value="UniProtKB-SubCell"/>
</dbReference>
<dbReference type="GO" id="GO:0003723">
    <property type="term" value="F:RNA binding"/>
    <property type="evidence" value="ECO:0007669"/>
    <property type="project" value="UniProtKB-KW"/>
</dbReference>
<dbReference type="GO" id="GO:0006417">
    <property type="term" value="P:regulation of translation"/>
    <property type="evidence" value="ECO:0007669"/>
    <property type="project" value="UniProtKB-KW"/>
</dbReference>
<dbReference type="Gene3D" id="1.25.10.10">
    <property type="entry name" value="Leucine-rich Repeat Variant"/>
    <property type="match status" value="1"/>
</dbReference>
<dbReference type="InterPro" id="IPR011989">
    <property type="entry name" value="ARM-like"/>
</dbReference>
<dbReference type="InterPro" id="IPR016024">
    <property type="entry name" value="ARM-type_fold"/>
</dbReference>
<dbReference type="SUPFAM" id="SSF48371">
    <property type="entry name" value="ARM repeat"/>
    <property type="match status" value="1"/>
</dbReference>